<keyword id="KW-0472">Membrane</keyword>
<keyword id="KW-0496">Mitochondrion</keyword>
<keyword id="KW-0999">Mitochondrion inner membrane</keyword>
<keyword id="KW-1278">Translocase</keyword>
<keyword id="KW-0812">Transmembrane</keyword>
<keyword id="KW-1133">Transmembrane helix</keyword>
<protein>
    <recommendedName>
        <fullName>Cytochrome c oxidase subunit 3</fullName>
        <ecNumber>7.1.1.9</ecNumber>
    </recommendedName>
    <alternativeName>
        <fullName>Cytochrome c oxidase polypeptide III</fullName>
    </alternativeName>
</protein>
<dbReference type="EC" id="7.1.1.9"/>
<dbReference type="EMBL" id="L22476">
    <property type="protein sequence ID" value="AAA72040.2"/>
    <property type="molecule type" value="Genomic_DNA"/>
</dbReference>
<dbReference type="EMBL" id="X55527">
    <property type="protein sequence ID" value="CAA39144.1"/>
    <property type="molecule type" value="Genomic_DNA"/>
</dbReference>
<dbReference type="SMR" id="P50657"/>
<dbReference type="Proteomes" id="UP000694400">
    <property type="component" value="Unplaced"/>
</dbReference>
<dbReference type="GO" id="GO:0005743">
    <property type="term" value="C:mitochondrial inner membrane"/>
    <property type="evidence" value="ECO:0007669"/>
    <property type="project" value="UniProtKB-SubCell"/>
</dbReference>
<dbReference type="GO" id="GO:0045277">
    <property type="term" value="C:respiratory chain complex IV"/>
    <property type="evidence" value="ECO:0000250"/>
    <property type="project" value="UniProtKB"/>
</dbReference>
<dbReference type="GO" id="GO:0004129">
    <property type="term" value="F:cytochrome-c oxidase activity"/>
    <property type="evidence" value="ECO:0007669"/>
    <property type="project" value="UniProtKB-EC"/>
</dbReference>
<dbReference type="GO" id="GO:0006123">
    <property type="term" value="P:mitochondrial electron transport, cytochrome c to oxygen"/>
    <property type="evidence" value="ECO:0007669"/>
    <property type="project" value="TreeGrafter"/>
</dbReference>
<dbReference type="FunFam" id="1.10.287.70:FF:000048">
    <property type="entry name" value="Cytochrome c oxidase subunit 3"/>
    <property type="match status" value="1"/>
</dbReference>
<dbReference type="Gene3D" id="1.10.287.70">
    <property type="match status" value="1"/>
</dbReference>
<dbReference type="InterPro" id="IPR024791">
    <property type="entry name" value="Cyt_c/ubiquinol_Oxase_su3"/>
</dbReference>
<dbReference type="InterPro" id="IPR000298">
    <property type="entry name" value="Cyt_c_oxidase-like_su3"/>
</dbReference>
<dbReference type="InterPro" id="IPR035973">
    <property type="entry name" value="Cyt_c_oxidase_su3-like_sf"/>
</dbReference>
<dbReference type="PANTHER" id="PTHR11403:SF7">
    <property type="entry name" value="CYTOCHROME C OXIDASE SUBUNIT 3"/>
    <property type="match status" value="1"/>
</dbReference>
<dbReference type="PANTHER" id="PTHR11403">
    <property type="entry name" value="CYTOCHROME C OXIDASE SUBUNIT III"/>
    <property type="match status" value="1"/>
</dbReference>
<dbReference type="Pfam" id="PF00510">
    <property type="entry name" value="COX3"/>
    <property type="match status" value="1"/>
</dbReference>
<dbReference type="SUPFAM" id="SSF81452">
    <property type="entry name" value="Cytochrome c oxidase subunit III-like"/>
    <property type="match status" value="1"/>
</dbReference>
<dbReference type="PROSITE" id="PS50253">
    <property type="entry name" value="COX3"/>
    <property type="match status" value="1"/>
</dbReference>
<name>COX3_ANAPL</name>
<reference key="1">
    <citation type="journal article" date="1993" name="J. Mol. Evol.">
        <title>Molecular characterization and evolution of a duck mitochondrial genome.</title>
        <authorList>
            <person name="Ramirez V."/>
            <person name="Savoie P."/>
            <person name="Morais R."/>
        </authorList>
    </citation>
    <scope>NUCLEOTIDE SEQUENCE [GENOMIC DNA]</scope>
    <source>
        <strain>Pekin breed</strain>
        <tissue>Liver</tissue>
    </source>
</reference>
<reference key="2">
    <citation type="journal article" date="1990" name="Curr. Genet.">
        <title>Gene organization of the Peking duck mitochondrial genome.</title>
        <authorList>
            <person name="Desjardins P."/>
            <person name="Ramirez V."/>
            <person name="Morais R."/>
        </authorList>
    </citation>
    <scope>NUCLEOTIDE SEQUENCE [GENOMIC DNA] OF 53-85</scope>
    <source>
        <strain>Pekin breed</strain>
        <tissue>Liver</tissue>
    </source>
</reference>
<accession>P50657</accession>
<feature type="chain" id="PRO_0000183731" description="Cytochrome c oxidase subunit 3">
    <location>
        <begin position="1"/>
        <end position="86" status="greater than"/>
    </location>
</feature>
<feature type="topological domain" description="Mitochondrial matrix" evidence="1">
    <location>
        <begin position="1"/>
        <end position="15"/>
    </location>
</feature>
<feature type="transmembrane region" description="Helical; Name=I" evidence="1">
    <location>
        <begin position="16"/>
        <end position="34"/>
    </location>
</feature>
<feature type="topological domain" description="Mitochondrial intermembrane" evidence="1">
    <location>
        <begin position="35"/>
        <end position="40"/>
    </location>
</feature>
<feature type="transmembrane region" description="Helical; Name=II" evidence="1">
    <location>
        <begin position="41"/>
        <end position="66"/>
    </location>
</feature>
<feature type="topological domain" description="Mitochondrial matrix" evidence="1">
    <location>
        <begin position="67"/>
        <end position="86" status="greater than"/>
    </location>
</feature>
<feature type="non-terminal residue">
    <location>
        <position position="86"/>
    </location>
</feature>
<evidence type="ECO:0000250" key="1">
    <source>
        <dbReference type="UniProtKB" id="P00415"/>
    </source>
</evidence>
<evidence type="ECO:0000250" key="2">
    <source>
        <dbReference type="UniProtKB" id="P00420"/>
    </source>
</evidence>
<evidence type="ECO:0000305" key="3"/>
<comment type="function">
    <text evidence="2">Component of the cytochrome c oxidase, the last enzyme in the mitochondrial electron transport chain which drives oxidative phosphorylation. The respiratory chain contains 3 multisubunit complexes succinate dehydrogenase (complex II, CII), ubiquinol-cytochrome c oxidoreductase (cytochrome b-c1 complex, complex III, CIII) and cytochrome c oxidase (complex IV, CIV), that cooperate to transfer electrons derived from NADH and succinate to molecular oxygen, creating an electrochemical gradient over the inner membrane that drives transmembrane transport and the ATP synthase. Cytochrome c oxidase is the component of the respiratory chain that catalyzes the reduction of oxygen to water. Electrons originating from reduced cytochrome c in the intermembrane space (IMS) are transferred via the dinuclear copper A center (CU(A)) of subunit 2 and heme A of subunit 1 to the active site in subunit 1, a binuclear center (BNC) formed by heme A3 and copper B (CU(B)). The BNC reduces molecular oxygen to 2 water molecules using 4 electrons from cytochrome c in the IMS and 4 protons from the mitochondrial matrix.</text>
</comment>
<comment type="catalytic activity">
    <reaction evidence="2">
        <text>4 Fe(II)-[cytochrome c] + O2 + 8 H(+)(in) = 4 Fe(III)-[cytochrome c] + 2 H2O + 4 H(+)(out)</text>
        <dbReference type="Rhea" id="RHEA:11436"/>
        <dbReference type="Rhea" id="RHEA-COMP:10350"/>
        <dbReference type="Rhea" id="RHEA-COMP:14399"/>
        <dbReference type="ChEBI" id="CHEBI:15377"/>
        <dbReference type="ChEBI" id="CHEBI:15378"/>
        <dbReference type="ChEBI" id="CHEBI:15379"/>
        <dbReference type="ChEBI" id="CHEBI:29033"/>
        <dbReference type="ChEBI" id="CHEBI:29034"/>
        <dbReference type="EC" id="7.1.1.9"/>
    </reaction>
    <physiologicalReaction direction="left-to-right" evidence="2">
        <dbReference type="Rhea" id="RHEA:11437"/>
    </physiologicalReaction>
</comment>
<comment type="subunit">
    <text evidence="1">Component of the cytochrome c oxidase (complex IV, CIV), a multisubunit enzyme composed of 14 subunits. The complex is composed of a catalytic core of 3 subunits MT-CO1, MT-CO2 and MT-CO3, encoded in the mitochondrial DNA, and 11 supernumerary subunits COX4I, COX5A, COX5B, COX6A, COX6B, COX6C, COX7A, COX7B, COX7C, COX8 and NDUFA4, which are encoded in the nuclear genome. The complex exists as a monomer or a dimer and forms supercomplexes (SCs) in the inner mitochondrial membrane with NADH-ubiquinone oxidoreductase (complex I, CI) and ubiquinol-cytochrome c oxidoreductase (cytochrome b-c1 complex, complex III, CIII), resulting in different assemblies (supercomplex SCI(1)III(2)IV(1) and megacomplex MCI(2)III(2)IV(2)).</text>
</comment>
<comment type="subcellular location">
    <subcellularLocation>
        <location evidence="1">Mitochondrion inner membrane</location>
        <topology evidence="1">Multi-pass membrane protein</topology>
    </subcellularLocation>
</comment>
<comment type="similarity">
    <text evidence="3">Belongs to the cytochrome c oxidase subunit 3 family.</text>
</comment>
<sequence length="86" mass="9768">MAHQAHSYHMVDPSPWPIFGAAAALLTTSGLVMWFHYNSSILLAAGLLSMLLVMLQWWREIVRESTFQGHHTPTVQKGLRYGMILF</sequence>
<proteinExistence type="inferred from homology"/>
<gene>
    <name type="primary">MT-CO3</name>
    <name type="synonym">COIII</name>
    <name type="synonym">COXIII</name>
    <name type="synonym">MTCO3</name>
</gene>
<organism>
    <name type="scientific">Anas platyrhynchos</name>
    <name type="common">Mallard</name>
    <name type="synonym">Anas boschas</name>
    <dbReference type="NCBI Taxonomy" id="8839"/>
    <lineage>
        <taxon>Eukaryota</taxon>
        <taxon>Metazoa</taxon>
        <taxon>Chordata</taxon>
        <taxon>Craniata</taxon>
        <taxon>Vertebrata</taxon>
        <taxon>Euteleostomi</taxon>
        <taxon>Archelosauria</taxon>
        <taxon>Archosauria</taxon>
        <taxon>Dinosauria</taxon>
        <taxon>Saurischia</taxon>
        <taxon>Theropoda</taxon>
        <taxon>Coelurosauria</taxon>
        <taxon>Aves</taxon>
        <taxon>Neognathae</taxon>
        <taxon>Galloanserae</taxon>
        <taxon>Anseriformes</taxon>
        <taxon>Anatidae</taxon>
        <taxon>Anatinae</taxon>
        <taxon>Anas</taxon>
    </lineage>
</organism>
<geneLocation type="mitochondrion"/>